<reference key="1">
    <citation type="journal article" date="2001" name="Nature">
        <title>Complete genome sequence of a multiple drug resistant Salmonella enterica serovar Typhi CT18.</title>
        <authorList>
            <person name="Parkhill J."/>
            <person name="Dougan G."/>
            <person name="James K.D."/>
            <person name="Thomson N.R."/>
            <person name="Pickard D."/>
            <person name="Wain J."/>
            <person name="Churcher C.M."/>
            <person name="Mungall K.L."/>
            <person name="Bentley S.D."/>
            <person name="Holden M.T.G."/>
            <person name="Sebaihia M."/>
            <person name="Baker S."/>
            <person name="Basham D."/>
            <person name="Brooks K."/>
            <person name="Chillingworth T."/>
            <person name="Connerton P."/>
            <person name="Cronin A."/>
            <person name="Davis P."/>
            <person name="Davies R.M."/>
            <person name="Dowd L."/>
            <person name="White N."/>
            <person name="Farrar J."/>
            <person name="Feltwell T."/>
            <person name="Hamlin N."/>
            <person name="Haque A."/>
            <person name="Hien T.T."/>
            <person name="Holroyd S."/>
            <person name="Jagels K."/>
            <person name="Krogh A."/>
            <person name="Larsen T.S."/>
            <person name="Leather S."/>
            <person name="Moule S."/>
            <person name="O'Gaora P."/>
            <person name="Parry C."/>
            <person name="Quail M.A."/>
            <person name="Rutherford K.M."/>
            <person name="Simmonds M."/>
            <person name="Skelton J."/>
            <person name="Stevens K."/>
            <person name="Whitehead S."/>
            <person name="Barrell B.G."/>
        </authorList>
    </citation>
    <scope>NUCLEOTIDE SEQUENCE [LARGE SCALE GENOMIC DNA]</scope>
    <source>
        <strain>CT18</strain>
    </source>
</reference>
<reference key="2">
    <citation type="journal article" date="2003" name="J. Bacteriol.">
        <title>Comparative genomics of Salmonella enterica serovar Typhi strains Ty2 and CT18.</title>
        <authorList>
            <person name="Deng W."/>
            <person name="Liou S.-R."/>
            <person name="Plunkett G. III"/>
            <person name="Mayhew G.F."/>
            <person name="Rose D.J."/>
            <person name="Burland V."/>
            <person name="Kodoyianni V."/>
            <person name="Schwartz D.C."/>
            <person name="Blattner F.R."/>
        </authorList>
    </citation>
    <scope>NUCLEOTIDE SEQUENCE [LARGE SCALE GENOMIC DNA]</scope>
    <source>
        <strain>ATCC 700931 / Ty2</strain>
    </source>
</reference>
<gene>
    <name type="primary">flgH</name>
    <name type="synonym">fla FVIII</name>
    <name type="synonym">flaY</name>
    <name type="ordered locus">STY1219</name>
    <name type="ordered locus">t1740</name>
</gene>
<protein>
    <recommendedName>
        <fullName>Flagellar L-ring protein</fullName>
    </recommendedName>
    <alternativeName>
        <fullName>Basal body L-ring protein</fullName>
    </alternativeName>
</protein>
<organism>
    <name type="scientific">Salmonella typhi</name>
    <dbReference type="NCBI Taxonomy" id="90370"/>
    <lineage>
        <taxon>Bacteria</taxon>
        <taxon>Pseudomonadati</taxon>
        <taxon>Pseudomonadota</taxon>
        <taxon>Gammaproteobacteria</taxon>
        <taxon>Enterobacterales</taxon>
        <taxon>Enterobacteriaceae</taxon>
        <taxon>Salmonella</taxon>
    </lineage>
</organism>
<keyword id="KW-0975">Bacterial flagellum</keyword>
<keyword id="KW-0998">Cell outer membrane</keyword>
<keyword id="KW-0449">Lipoprotein</keyword>
<keyword id="KW-0472">Membrane</keyword>
<keyword id="KW-0564">Palmitate</keyword>
<keyword id="KW-0732">Signal</keyword>
<dbReference type="EMBL" id="AL513382">
    <property type="protein sequence ID" value="CAD08304.1"/>
    <property type="molecule type" value="Genomic_DNA"/>
</dbReference>
<dbReference type="EMBL" id="AE014613">
    <property type="protein sequence ID" value="AAO69364.1"/>
    <property type="molecule type" value="Genomic_DNA"/>
</dbReference>
<dbReference type="RefSeq" id="NP_455673.1">
    <property type="nucleotide sequence ID" value="NC_003198.1"/>
</dbReference>
<dbReference type="RefSeq" id="WP_001174897.1">
    <property type="nucleotide sequence ID" value="NZ_WSUR01000018.1"/>
</dbReference>
<dbReference type="SMR" id="P0A1N9"/>
<dbReference type="STRING" id="220341.gene:17585184"/>
<dbReference type="KEGG" id="stt:t1740"/>
<dbReference type="KEGG" id="sty:STY1219"/>
<dbReference type="PATRIC" id="fig|220341.7.peg.1220"/>
<dbReference type="eggNOG" id="COG2063">
    <property type="taxonomic scope" value="Bacteria"/>
</dbReference>
<dbReference type="HOGENOM" id="CLU_069313_0_0_6"/>
<dbReference type="OMA" id="WFDRFFL"/>
<dbReference type="OrthoDB" id="9789463at2"/>
<dbReference type="Proteomes" id="UP000000541">
    <property type="component" value="Chromosome"/>
</dbReference>
<dbReference type="Proteomes" id="UP000002670">
    <property type="component" value="Chromosome"/>
</dbReference>
<dbReference type="GO" id="GO:0009427">
    <property type="term" value="C:bacterial-type flagellum basal body, distal rod, L ring"/>
    <property type="evidence" value="ECO:0007669"/>
    <property type="project" value="InterPro"/>
</dbReference>
<dbReference type="GO" id="GO:0009279">
    <property type="term" value="C:cell outer membrane"/>
    <property type="evidence" value="ECO:0007669"/>
    <property type="project" value="UniProtKB-SubCell"/>
</dbReference>
<dbReference type="GO" id="GO:0003774">
    <property type="term" value="F:cytoskeletal motor activity"/>
    <property type="evidence" value="ECO:0007669"/>
    <property type="project" value="InterPro"/>
</dbReference>
<dbReference type="GO" id="GO:0071973">
    <property type="term" value="P:bacterial-type flagellum-dependent cell motility"/>
    <property type="evidence" value="ECO:0007669"/>
    <property type="project" value="InterPro"/>
</dbReference>
<dbReference type="HAMAP" id="MF_00415">
    <property type="entry name" value="FlgH"/>
    <property type="match status" value="1"/>
</dbReference>
<dbReference type="InterPro" id="IPR000527">
    <property type="entry name" value="Flag_Lring"/>
</dbReference>
<dbReference type="NCBIfam" id="NF001301">
    <property type="entry name" value="PRK00249.1-1"/>
    <property type="match status" value="1"/>
</dbReference>
<dbReference type="PANTHER" id="PTHR34933">
    <property type="entry name" value="FLAGELLAR L-RING PROTEIN"/>
    <property type="match status" value="1"/>
</dbReference>
<dbReference type="PANTHER" id="PTHR34933:SF3">
    <property type="entry name" value="FLAGELLAR L-RING PROTEIN"/>
    <property type="match status" value="1"/>
</dbReference>
<dbReference type="Pfam" id="PF02107">
    <property type="entry name" value="FlgH"/>
    <property type="match status" value="1"/>
</dbReference>
<dbReference type="PRINTS" id="PR01008">
    <property type="entry name" value="FLGLRINGFLGH"/>
</dbReference>
<dbReference type="PROSITE" id="PS51257">
    <property type="entry name" value="PROKAR_LIPOPROTEIN"/>
    <property type="match status" value="1"/>
</dbReference>
<name>FLGH_SALTI</name>
<feature type="signal peptide" evidence="2">
    <location>
        <begin position="1"/>
        <end position="21"/>
    </location>
</feature>
<feature type="chain" id="PRO_0000009470" description="Flagellar L-ring protein">
    <location>
        <begin position="22"/>
        <end position="232"/>
    </location>
</feature>
<feature type="lipid moiety-binding region" description="N-palmitoyl cysteine" evidence="2">
    <location>
        <position position="22"/>
    </location>
</feature>
<feature type="lipid moiety-binding region" description="S-diacylglycerol cysteine" evidence="2">
    <location>
        <position position="22"/>
    </location>
</feature>
<sequence>MQKYALHAYPVMALMVATLTGCAWIPAKPLVQGATTAQPIPGPVPVANGSIFQSAQPINYGYQPLFEDRRPRNIGDTLTIVLQENVSASKSSSANASRDGKTSFGFDTVPRYLQGLFGNSRADMEASGGNSFNGKGGANASNTFSGTLTVTVDQVLANGNLHVVGEKQIAINQGTEFIRFSGVVNPRTISGSNSVPSTQVADARIEYVGNGYINEAQNMGWLQRFFLNLSPM</sequence>
<comment type="function">
    <text evidence="1">Assembles around the rod to form the L-ring and probably protects the motor/basal body from shearing forces during rotation.</text>
</comment>
<comment type="subunit">
    <text evidence="1">The basal body constitutes a major portion of the flagellar organelle and consists of four rings (L,P,S, and M) mounted on a central rod.</text>
</comment>
<comment type="subcellular location">
    <subcellularLocation>
        <location evidence="1">Cell outer membrane</location>
        <topology evidence="1">Lipid-anchor</topology>
    </subcellularLocation>
    <subcellularLocation>
        <location evidence="1">Bacterial flagellum basal body</location>
    </subcellularLocation>
</comment>
<comment type="similarity">
    <text evidence="3">Belongs to the FlgH family.</text>
</comment>
<proteinExistence type="inferred from homology"/>
<accession>P0A1N9</accession>
<accession>P15929</accession>
<evidence type="ECO:0000250" key="1"/>
<evidence type="ECO:0000255" key="2"/>
<evidence type="ECO:0000305" key="3"/>